<dbReference type="EMBL" id="CP000087">
    <property type="protein sequence ID" value="ABE04958.1"/>
    <property type="molecule type" value="Genomic_DNA"/>
</dbReference>
<dbReference type="RefSeq" id="WP_011477543.1">
    <property type="nucleotide sequence ID" value="NC_007940.1"/>
</dbReference>
<dbReference type="SMR" id="Q1RI56"/>
<dbReference type="KEGG" id="rbe:RBE_0877"/>
<dbReference type="HOGENOM" id="CLU_1276797_0_0_5"/>
<dbReference type="OrthoDB" id="7161167at2"/>
<dbReference type="Proteomes" id="UP000001951">
    <property type="component" value="Chromosome"/>
</dbReference>
<dbReference type="GO" id="GO:0005886">
    <property type="term" value="C:plasma membrane"/>
    <property type="evidence" value="ECO:0007669"/>
    <property type="project" value="UniProtKB-SubCell"/>
</dbReference>
<dbReference type="PROSITE" id="PS51257">
    <property type="entry name" value="PROKAR_LIPOPROTEIN"/>
    <property type="match status" value="1"/>
</dbReference>
<organism>
    <name type="scientific">Rickettsia bellii (strain RML369-C)</name>
    <dbReference type="NCBI Taxonomy" id="336407"/>
    <lineage>
        <taxon>Bacteria</taxon>
        <taxon>Pseudomonadati</taxon>
        <taxon>Pseudomonadota</taxon>
        <taxon>Alphaproteobacteria</taxon>
        <taxon>Rickettsiales</taxon>
        <taxon>Rickettsiaceae</taxon>
        <taxon>Rickettsieae</taxon>
        <taxon>Rickettsia</taxon>
        <taxon>belli group</taxon>
    </lineage>
</organism>
<comment type="subcellular location">
    <subcellularLocation>
        <location evidence="2">Cell membrane</location>
        <topology evidence="2">Lipid-anchor</topology>
    </subcellularLocation>
</comment>
<proteinExistence type="inferred from homology"/>
<protein>
    <recommendedName>
        <fullName>Uncharacterized lipoprotein RBE_0877</fullName>
    </recommendedName>
</protein>
<name>Y877_RICBR</name>
<gene>
    <name type="ordered locus">RBE_0877</name>
</gene>
<accession>Q1RI56</accession>
<keyword id="KW-1003">Cell membrane</keyword>
<keyword id="KW-0175">Coiled coil</keyword>
<keyword id="KW-0449">Lipoprotein</keyword>
<keyword id="KW-0472">Membrane</keyword>
<keyword id="KW-0564">Palmitate</keyword>
<keyword id="KW-0732">Signal</keyword>
<evidence type="ECO:0000255" key="1"/>
<evidence type="ECO:0000255" key="2">
    <source>
        <dbReference type="PROSITE-ProRule" id="PRU00303"/>
    </source>
</evidence>
<evidence type="ECO:0000256" key="3">
    <source>
        <dbReference type="SAM" id="MobiDB-lite"/>
    </source>
</evidence>
<sequence length="214" mass="24803">MLKKIIILFLGVFVLSGCTDSFRGYFQKSANNRLVDSKGFKGGKRKPLYNNKYISLAKKNIVEDNLDDPEDDDDDYDNPLRGEQIDPVKRNREIYLKMIRRDMEKYKAESGESSDDDDMTLSKANKKVRKDNTDKERKMQEELDQIKAMLRETKRDISKYTCPNATANQNYVPPVSNYEPVAPVKNNKPYNNNSKVKQKFIREDDDYSSNACSI</sequence>
<feature type="signal peptide" evidence="2">
    <location>
        <begin position="1"/>
        <end position="17"/>
    </location>
</feature>
<feature type="chain" id="PRO_0000280785" description="Uncharacterized lipoprotein RBE_0877">
    <location>
        <begin position="18"/>
        <end position="214"/>
    </location>
</feature>
<feature type="region of interest" description="Disordered" evidence="3">
    <location>
        <begin position="64"/>
        <end position="83"/>
    </location>
</feature>
<feature type="region of interest" description="Disordered" evidence="3">
    <location>
        <begin position="106"/>
        <end position="138"/>
    </location>
</feature>
<feature type="region of interest" description="Disordered" evidence="3">
    <location>
        <begin position="166"/>
        <end position="197"/>
    </location>
</feature>
<feature type="coiled-coil region" evidence="1">
    <location>
        <begin position="120"/>
        <end position="162"/>
    </location>
</feature>
<feature type="compositionally biased region" description="Acidic residues" evidence="3">
    <location>
        <begin position="64"/>
        <end position="77"/>
    </location>
</feature>
<feature type="lipid moiety-binding region" description="N-palmitoyl cysteine" evidence="2">
    <location>
        <position position="18"/>
    </location>
</feature>
<feature type="lipid moiety-binding region" description="S-diacylglycerol cysteine" evidence="2">
    <location>
        <position position="18"/>
    </location>
</feature>
<reference key="1">
    <citation type="journal article" date="2006" name="PLoS Genet.">
        <title>Genome sequence of Rickettsia bellii illuminates the role of amoebae in gene exchanges between intracellular pathogens.</title>
        <authorList>
            <person name="Ogata H."/>
            <person name="La Scola B."/>
            <person name="Audic S."/>
            <person name="Renesto P."/>
            <person name="Blanc G."/>
            <person name="Robert C."/>
            <person name="Fournier P.-E."/>
            <person name="Claverie J.-M."/>
            <person name="Raoult D."/>
        </authorList>
    </citation>
    <scope>NUCLEOTIDE SEQUENCE [LARGE SCALE GENOMIC DNA]</scope>
    <source>
        <strain>RML369-C</strain>
    </source>
</reference>